<keyword id="KW-0238">DNA-binding</keyword>
<keyword id="KW-0371">Homeobox</keyword>
<keyword id="KW-0539">Nucleus</keyword>
<keyword id="KW-0804">Transcription</keyword>
<keyword id="KW-0805">Transcription regulation</keyword>
<accession>P37935</accession>
<organism>
    <name type="scientific">Schizophyllum commune</name>
    <name type="common">Split gill fungus</name>
    <dbReference type="NCBI Taxonomy" id="5334"/>
    <lineage>
        <taxon>Eukaryota</taxon>
        <taxon>Fungi</taxon>
        <taxon>Dikarya</taxon>
        <taxon>Basidiomycota</taxon>
        <taxon>Agaricomycotina</taxon>
        <taxon>Agaricomycetes</taxon>
        <taxon>Agaricomycetidae</taxon>
        <taxon>Agaricales</taxon>
        <taxon>Schizophyllaceae</taxon>
        <taxon>Schizophyllum</taxon>
    </lineage>
</organism>
<protein>
    <recommendedName>
        <fullName>Mating-type protein A-alpha Y4</fullName>
    </recommendedName>
</protein>
<evidence type="ECO:0000255" key="1">
    <source>
        <dbReference type="PROSITE-ProRule" id="PRU00108"/>
    </source>
</evidence>
<evidence type="ECO:0000256" key="2">
    <source>
        <dbReference type="SAM" id="MobiDB-lite"/>
    </source>
</evidence>
<dbReference type="EMBL" id="M97181">
    <property type="protein sequence ID" value="AAB01373.1"/>
    <property type="molecule type" value="Genomic_DNA"/>
</dbReference>
<dbReference type="PIR" id="C37271">
    <property type="entry name" value="C37271"/>
</dbReference>
<dbReference type="VEuPathDB" id="FungiDB:SCHCODRAFT_02596714"/>
<dbReference type="GO" id="GO:0005634">
    <property type="term" value="C:nucleus"/>
    <property type="evidence" value="ECO:0007669"/>
    <property type="project" value="UniProtKB-SubCell"/>
</dbReference>
<dbReference type="GO" id="GO:0003677">
    <property type="term" value="F:DNA binding"/>
    <property type="evidence" value="ECO:0007669"/>
    <property type="project" value="UniProtKB-KW"/>
</dbReference>
<dbReference type="GO" id="GO:0000981">
    <property type="term" value="F:DNA-binding transcription factor activity, RNA polymerase II-specific"/>
    <property type="evidence" value="ECO:0007669"/>
    <property type="project" value="InterPro"/>
</dbReference>
<dbReference type="GO" id="GO:0019953">
    <property type="term" value="P:sexual reproduction"/>
    <property type="evidence" value="ECO:0007669"/>
    <property type="project" value="InterPro"/>
</dbReference>
<dbReference type="CDD" id="cd00086">
    <property type="entry name" value="homeodomain"/>
    <property type="match status" value="1"/>
</dbReference>
<dbReference type="Gene3D" id="1.10.10.60">
    <property type="entry name" value="Homeodomain-like"/>
    <property type="match status" value="1"/>
</dbReference>
<dbReference type="InterPro" id="IPR007689">
    <property type="entry name" value="AalphaY_mating_typ-dep-bd-dom"/>
</dbReference>
<dbReference type="InterPro" id="IPR001356">
    <property type="entry name" value="HD"/>
</dbReference>
<dbReference type="InterPro" id="IPR017970">
    <property type="entry name" value="Homeobox_CS"/>
</dbReference>
<dbReference type="InterPro" id="IPR009057">
    <property type="entry name" value="Homeodomain-like_sf"/>
</dbReference>
<dbReference type="Pfam" id="PF04611">
    <property type="entry name" value="AalphaY_MDB"/>
    <property type="match status" value="1"/>
</dbReference>
<dbReference type="Pfam" id="PF00046">
    <property type="entry name" value="Homeodomain"/>
    <property type="match status" value="1"/>
</dbReference>
<dbReference type="SMART" id="SM00389">
    <property type="entry name" value="HOX"/>
    <property type="match status" value="1"/>
</dbReference>
<dbReference type="SUPFAM" id="SSF46689">
    <property type="entry name" value="Homeodomain-like"/>
    <property type="match status" value="1"/>
</dbReference>
<dbReference type="PROSITE" id="PS00027">
    <property type="entry name" value="HOMEOBOX_1"/>
    <property type="match status" value="1"/>
</dbReference>
<dbReference type="PROSITE" id="PS50071">
    <property type="entry name" value="HOMEOBOX_2"/>
    <property type="match status" value="1"/>
</dbReference>
<reference key="1">
    <citation type="journal article" date="1992" name="Proc. Natl. Acad. Sci. U.S.A.">
        <title>The A alpha mating locus of Schizophyllum commune encodes two dissimilar multiallelic homeodomain proteins.</title>
        <authorList>
            <person name="Stankis M.M."/>
            <person name="Specht C.A."/>
            <person name="Yang H."/>
            <person name="Giasson L."/>
            <person name="Ullrich R.C."/>
            <person name="Novotny C.P."/>
        </authorList>
    </citation>
    <scope>NUCLEOTIDE SEQUENCE [GENOMIC DNA]</scope>
    <source>
        <strain>ATCC 44201 / CBS 340.81 / UVM 4-40 / 4-40</strain>
    </source>
</reference>
<sequence length="928" mass="101486">MAELLACLQSISAHAKDMMALARSRGATGSRPTPTTLPHFDELLPPNLDFVRTRLQEARLPPKAIKGTLSAYESACARWKHDLEEAFDRTAHSISPHNFQRLAQLRTRLYVEQVQKWLYEVLQVPERWKAEMEKQRAHINATMGPDKTTGPGKRSRPKFHSEYTPVLELYFHFNAYPTYADRRILAEKTGMLTRQITVWFQNHRRRAKGPLPRMSPTAKIPMEEFERQLENLARKIVPVLLPPTLRRFAPGNENKSLAAASRQSAGKSSKNAKRLSELEKAQQVPRKPSENAEAGPSSLGAMLARVMHNDSVSKKKSKKAKKEKASQQNVVCDVEMRDATATKEKRRKMKKLPRAAGQPFDVPMDVERADKASRKAMKKAKKSPRAFDSRAELAFAQAAYPSPSQYAYVHSRKPSAQKPSSDSPRKDFGQLGKGRPSSNSTSSTVPPHRVSSRLNAMRPPYAFPAPYNAAAVPLTFSVASSTQFAFATDNRSFGFAERTPRKATVPAACTLIDYLISKFAGLRLLCVEQSVSSRSISLSTSESGKLAGLRTEGLTTGEASGVQTHVDSYAARRAITYVPPSAPLDCVVHNLARALQLKQVRPMVLAQPVVQPDAFAPFIARAERRARRKERKQRKALEEKQAKKDRKERQKASRSQRDSPSMDADVQSRASSVASTSSLPARKSSKKSRKSKGESAASSRATSVASSVRTPSLSSTSSRRSSGMSMPGTPRPEQDLPIMATADFNFAGDEDVTMTPDLAAQLFGEDEDGAAALGQMQYEEFSPDMLTFTSTAGGALSDMTADVNMPDLGNAYTSQQSVDDMNWTGFGLDAQNSASPGLFGDESNTGLDWLLSHNLLGDTQMSDLSYTAPTSTPSQINILGSTYACELGGSDSLGTPFNMNDWTFGLGACDDGFAGFGNNLLGGTAVAV</sequence>
<name>MAAY4_SCHCO</name>
<feature type="chain" id="PRO_0000049189" description="Mating-type protein A-alpha Y4">
    <location>
        <begin position="1"/>
        <end position="928"/>
    </location>
</feature>
<feature type="DNA-binding region" description="Homeobox" evidence="1">
    <location>
        <begin position="152"/>
        <end position="211"/>
    </location>
</feature>
<feature type="region of interest" description="Disordered" evidence="2">
    <location>
        <begin position="255"/>
        <end position="296"/>
    </location>
</feature>
<feature type="region of interest" description="Disordered" evidence="2">
    <location>
        <begin position="310"/>
        <end position="329"/>
    </location>
</feature>
<feature type="region of interest" description="Disordered" evidence="2">
    <location>
        <begin position="340"/>
        <end position="359"/>
    </location>
</feature>
<feature type="region of interest" description="Disordered" evidence="2">
    <location>
        <begin position="406"/>
        <end position="451"/>
    </location>
</feature>
<feature type="region of interest" description="Disordered" evidence="2">
    <location>
        <begin position="626"/>
        <end position="736"/>
    </location>
</feature>
<feature type="compositionally biased region" description="Basic residues" evidence="2">
    <location>
        <begin position="344"/>
        <end position="353"/>
    </location>
</feature>
<feature type="compositionally biased region" description="Basic and acidic residues" evidence="2">
    <location>
        <begin position="635"/>
        <end position="657"/>
    </location>
</feature>
<feature type="compositionally biased region" description="Low complexity" evidence="2">
    <location>
        <begin position="668"/>
        <end position="682"/>
    </location>
</feature>
<feature type="compositionally biased region" description="Low complexity" evidence="2">
    <location>
        <begin position="694"/>
        <end position="728"/>
    </location>
</feature>
<comment type="function">
    <text>Specifies A-alpha-4 mating-type. May regulate the expression of genes specific to the homokaryotic cell type.</text>
</comment>
<comment type="subcellular location">
    <subcellularLocation>
        <location evidence="1">Nucleus</location>
    </subcellularLocation>
</comment>
<comment type="developmental stage">
    <text>Expressed constitutively in homokaryons.</text>
</comment>
<proteinExistence type="evidence at transcript level"/>